<protein>
    <recommendedName>
        <fullName>DegV domain-containing protein M6_Spy0690</fullName>
    </recommendedName>
</protein>
<evidence type="ECO:0000250" key="1"/>
<evidence type="ECO:0000250" key="2">
    <source>
        <dbReference type="UniProtKB" id="Q9X1H9"/>
    </source>
</evidence>
<evidence type="ECO:0000255" key="3">
    <source>
        <dbReference type="PROSITE-ProRule" id="PRU00815"/>
    </source>
</evidence>
<sequence>MKLAVITDSTATLPIDLKQDKAIFSLDIPVIIDDETYFEGRNLSIDDFYQKMADSQNLPKTSQPSLSELDNLLGLLSSKGYTHVIGLFLAGGISGFWQNIQFLAEEHPEIEMAFPDSKITSAPLGSMVKNVLDWSRQGMTFQAILNKLQEQIDRTTAFIMVDDLNHLVKGGRLSNGSALLGNLLSIKPILRFDEEGKIVVYEKVRTEKKAMKRLVEILNDLIADGQYNVSIIHSKAQDKADYLKRLLQDSGYQYDIEEVHFGAVIATHLGEGAIAFGVTPRL</sequence>
<reference key="1">
    <citation type="journal article" date="2004" name="J. Infect. Dis.">
        <title>Progress toward characterization of the group A Streptococcus metagenome: complete genome sequence of a macrolide-resistant serotype M6 strain.</title>
        <authorList>
            <person name="Banks D.J."/>
            <person name="Porcella S.F."/>
            <person name="Barbian K.D."/>
            <person name="Beres S.B."/>
            <person name="Philips L.E."/>
            <person name="Voyich J.M."/>
            <person name="DeLeo F.R."/>
            <person name="Martin J.M."/>
            <person name="Somerville G.A."/>
            <person name="Musser J.M."/>
        </authorList>
    </citation>
    <scope>NUCLEOTIDE SEQUENCE [LARGE SCALE GENOMIC DNA]</scope>
    <source>
        <strain>ATCC BAA-946 / MGAS10394</strain>
    </source>
</reference>
<keyword id="KW-0446">Lipid-binding</keyword>
<organism>
    <name type="scientific">Streptococcus pyogenes serotype M6 (strain ATCC BAA-946 / MGAS10394)</name>
    <dbReference type="NCBI Taxonomy" id="286636"/>
    <lineage>
        <taxon>Bacteria</taxon>
        <taxon>Bacillati</taxon>
        <taxon>Bacillota</taxon>
        <taxon>Bacilli</taxon>
        <taxon>Lactobacillales</taxon>
        <taxon>Streptococcaceae</taxon>
        <taxon>Streptococcus</taxon>
    </lineage>
</organism>
<comment type="function">
    <text evidence="1">May bind long-chain fatty acids, such as palmitate, and may play a role in lipid transport or fatty acid metabolism.</text>
</comment>
<gene>
    <name type="ordered locus">M6_Spy0690</name>
</gene>
<name>Y690_STRP6</name>
<dbReference type="EMBL" id="CP000003">
    <property type="protein sequence ID" value="AAT86825.1"/>
    <property type="molecule type" value="Genomic_DNA"/>
</dbReference>
<dbReference type="RefSeq" id="WP_011017667.1">
    <property type="nucleotide sequence ID" value="NC_006086.1"/>
</dbReference>
<dbReference type="SMR" id="Q5XCN8"/>
<dbReference type="KEGG" id="spa:M6_Spy0690"/>
<dbReference type="HOGENOM" id="CLU_048251_3_1_9"/>
<dbReference type="Proteomes" id="UP000001167">
    <property type="component" value="Chromosome"/>
</dbReference>
<dbReference type="GO" id="GO:0008289">
    <property type="term" value="F:lipid binding"/>
    <property type="evidence" value="ECO:0007669"/>
    <property type="project" value="UniProtKB-KW"/>
</dbReference>
<dbReference type="Gene3D" id="3.30.1180.10">
    <property type="match status" value="1"/>
</dbReference>
<dbReference type="Gene3D" id="3.40.50.10170">
    <property type="match status" value="1"/>
</dbReference>
<dbReference type="InterPro" id="IPR003797">
    <property type="entry name" value="DegV"/>
</dbReference>
<dbReference type="InterPro" id="IPR043168">
    <property type="entry name" value="DegV_C"/>
</dbReference>
<dbReference type="InterPro" id="IPR050270">
    <property type="entry name" value="DegV_domain_contain"/>
</dbReference>
<dbReference type="NCBIfam" id="TIGR00762">
    <property type="entry name" value="DegV"/>
    <property type="match status" value="1"/>
</dbReference>
<dbReference type="PANTHER" id="PTHR33434">
    <property type="entry name" value="DEGV DOMAIN-CONTAINING PROTEIN DR_1986-RELATED"/>
    <property type="match status" value="1"/>
</dbReference>
<dbReference type="PANTHER" id="PTHR33434:SF2">
    <property type="entry name" value="FATTY ACID-BINDING PROTEIN TM_1468"/>
    <property type="match status" value="1"/>
</dbReference>
<dbReference type="Pfam" id="PF02645">
    <property type="entry name" value="DegV"/>
    <property type="match status" value="1"/>
</dbReference>
<dbReference type="SUPFAM" id="SSF82549">
    <property type="entry name" value="DAK1/DegV-like"/>
    <property type="match status" value="1"/>
</dbReference>
<dbReference type="PROSITE" id="PS51482">
    <property type="entry name" value="DEGV"/>
    <property type="match status" value="1"/>
</dbReference>
<feature type="chain" id="PRO_0000209802" description="DegV domain-containing protein M6_Spy0690">
    <location>
        <begin position="1"/>
        <end position="282"/>
    </location>
</feature>
<feature type="domain" description="DegV" evidence="3">
    <location>
        <begin position="3"/>
        <end position="280"/>
    </location>
</feature>
<feature type="binding site" evidence="2">
    <location>
        <position position="61"/>
    </location>
    <ligand>
        <name>hexadecanoate</name>
        <dbReference type="ChEBI" id="CHEBI:7896"/>
    </ligand>
</feature>
<feature type="binding site" evidence="2">
    <location>
        <position position="94"/>
    </location>
    <ligand>
        <name>hexadecanoate</name>
        <dbReference type="ChEBI" id="CHEBI:7896"/>
    </ligand>
</feature>
<proteinExistence type="inferred from homology"/>
<accession>Q5XCN8</accession>